<comment type="function">
    <text evidence="1">Hydrolyzes ribosome-free peptidyl-tRNAs (with 1 or more amino acids incorporated), which drop off the ribosome during protein synthesis, or as a result of ribosome stalling.</text>
</comment>
<comment type="function">
    <text evidence="1">Catalyzes the release of premature peptidyl moieties from peptidyl-tRNA molecules trapped in stalled 50S ribosomal subunits, and thus maintains levels of free tRNAs and 50S ribosomes.</text>
</comment>
<comment type="catalytic activity">
    <reaction evidence="1">
        <text>an N-acyl-L-alpha-aminoacyl-tRNA + H2O = an N-acyl-L-amino acid + a tRNA + H(+)</text>
        <dbReference type="Rhea" id="RHEA:54448"/>
        <dbReference type="Rhea" id="RHEA-COMP:10123"/>
        <dbReference type="Rhea" id="RHEA-COMP:13883"/>
        <dbReference type="ChEBI" id="CHEBI:15377"/>
        <dbReference type="ChEBI" id="CHEBI:15378"/>
        <dbReference type="ChEBI" id="CHEBI:59874"/>
        <dbReference type="ChEBI" id="CHEBI:78442"/>
        <dbReference type="ChEBI" id="CHEBI:138191"/>
        <dbReference type="EC" id="3.1.1.29"/>
    </reaction>
</comment>
<comment type="subunit">
    <text evidence="1">Monomer.</text>
</comment>
<comment type="subcellular location">
    <subcellularLocation>
        <location evidence="1">Cytoplasm</location>
    </subcellularLocation>
</comment>
<comment type="similarity">
    <text evidence="1">Belongs to the PTH family.</text>
</comment>
<gene>
    <name evidence="1" type="primary">pth</name>
    <name type="ordered locus">APP7_0033</name>
</gene>
<proteinExistence type="inferred from homology"/>
<sequence>MSQIKLIVGLANSGTKYEDTRHNAGEWLINEIARQFNVSLKEEAKFFGKVAKINAAGGEVRLLVPTTFMNLSGKAVGALANFYRIKPEEILVAHDELDLPPGVAKIKQGGGHGGHNGLKDIIASLGNSNNFYRVRIGIGHPGSKELVAGYVLGKPSPQDQEKINAAVDEAGRCVDLLLKDGITKATNRLNAFKA</sequence>
<name>PTH_ACTP7</name>
<dbReference type="EC" id="3.1.1.29" evidence="1"/>
<dbReference type="EMBL" id="CP001091">
    <property type="protein sequence ID" value="ACE60685.1"/>
    <property type="molecule type" value="Genomic_DNA"/>
</dbReference>
<dbReference type="RefSeq" id="WP_005599985.1">
    <property type="nucleotide sequence ID" value="NC_010939.1"/>
</dbReference>
<dbReference type="SMR" id="B3GZM3"/>
<dbReference type="KEGG" id="apa:APP7_0033"/>
<dbReference type="HOGENOM" id="CLU_062456_3_1_6"/>
<dbReference type="Proteomes" id="UP000001226">
    <property type="component" value="Chromosome"/>
</dbReference>
<dbReference type="GO" id="GO:0005737">
    <property type="term" value="C:cytoplasm"/>
    <property type="evidence" value="ECO:0007669"/>
    <property type="project" value="UniProtKB-SubCell"/>
</dbReference>
<dbReference type="GO" id="GO:0004045">
    <property type="term" value="F:peptidyl-tRNA hydrolase activity"/>
    <property type="evidence" value="ECO:0007669"/>
    <property type="project" value="UniProtKB-UniRule"/>
</dbReference>
<dbReference type="GO" id="GO:0000049">
    <property type="term" value="F:tRNA binding"/>
    <property type="evidence" value="ECO:0007669"/>
    <property type="project" value="UniProtKB-UniRule"/>
</dbReference>
<dbReference type="GO" id="GO:0006515">
    <property type="term" value="P:protein quality control for misfolded or incompletely synthesized proteins"/>
    <property type="evidence" value="ECO:0007669"/>
    <property type="project" value="UniProtKB-UniRule"/>
</dbReference>
<dbReference type="GO" id="GO:0072344">
    <property type="term" value="P:rescue of stalled ribosome"/>
    <property type="evidence" value="ECO:0007669"/>
    <property type="project" value="UniProtKB-UniRule"/>
</dbReference>
<dbReference type="CDD" id="cd00462">
    <property type="entry name" value="PTH"/>
    <property type="match status" value="1"/>
</dbReference>
<dbReference type="FunFam" id="3.40.50.1470:FF:000001">
    <property type="entry name" value="Peptidyl-tRNA hydrolase"/>
    <property type="match status" value="1"/>
</dbReference>
<dbReference type="Gene3D" id="3.40.50.1470">
    <property type="entry name" value="Peptidyl-tRNA hydrolase"/>
    <property type="match status" value="1"/>
</dbReference>
<dbReference type="HAMAP" id="MF_00083">
    <property type="entry name" value="Pept_tRNA_hydro_bact"/>
    <property type="match status" value="1"/>
</dbReference>
<dbReference type="InterPro" id="IPR001328">
    <property type="entry name" value="Pept_tRNA_hydro"/>
</dbReference>
<dbReference type="InterPro" id="IPR018171">
    <property type="entry name" value="Pept_tRNA_hydro_CS"/>
</dbReference>
<dbReference type="InterPro" id="IPR036416">
    <property type="entry name" value="Pept_tRNA_hydro_sf"/>
</dbReference>
<dbReference type="NCBIfam" id="TIGR00447">
    <property type="entry name" value="pth"/>
    <property type="match status" value="1"/>
</dbReference>
<dbReference type="PANTHER" id="PTHR17224">
    <property type="entry name" value="PEPTIDYL-TRNA HYDROLASE"/>
    <property type="match status" value="1"/>
</dbReference>
<dbReference type="PANTHER" id="PTHR17224:SF1">
    <property type="entry name" value="PEPTIDYL-TRNA HYDROLASE"/>
    <property type="match status" value="1"/>
</dbReference>
<dbReference type="Pfam" id="PF01195">
    <property type="entry name" value="Pept_tRNA_hydro"/>
    <property type="match status" value="1"/>
</dbReference>
<dbReference type="SUPFAM" id="SSF53178">
    <property type="entry name" value="Peptidyl-tRNA hydrolase-like"/>
    <property type="match status" value="1"/>
</dbReference>
<dbReference type="PROSITE" id="PS01195">
    <property type="entry name" value="PEPT_TRNA_HYDROL_1"/>
    <property type="match status" value="1"/>
</dbReference>
<dbReference type="PROSITE" id="PS01196">
    <property type="entry name" value="PEPT_TRNA_HYDROL_2"/>
    <property type="match status" value="1"/>
</dbReference>
<feature type="chain" id="PRO_1000092901" description="Peptidyl-tRNA hydrolase">
    <location>
        <begin position="1"/>
        <end position="194"/>
    </location>
</feature>
<feature type="active site" description="Proton acceptor" evidence="1">
    <location>
        <position position="22"/>
    </location>
</feature>
<feature type="binding site" evidence="1">
    <location>
        <position position="17"/>
    </location>
    <ligand>
        <name>tRNA</name>
        <dbReference type="ChEBI" id="CHEBI:17843"/>
    </ligand>
</feature>
<feature type="binding site" evidence="1">
    <location>
        <position position="68"/>
    </location>
    <ligand>
        <name>tRNA</name>
        <dbReference type="ChEBI" id="CHEBI:17843"/>
    </ligand>
</feature>
<feature type="binding site" evidence="1">
    <location>
        <position position="70"/>
    </location>
    <ligand>
        <name>tRNA</name>
        <dbReference type="ChEBI" id="CHEBI:17843"/>
    </ligand>
</feature>
<feature type="binding site" evidence="1">
    <location>
        <position position="116"/>
    </location>
    <ligand>
        <name>tRNA</name>
        <dbReference type="ChEBI" id="CHEBI:17843"/>
    </ligand>
</feature>
<feature type="site" description="Discriminates between blocked and unblocked aminoacyl-tRNA" evidence="1">
    <location>
        <position position="12"/>
    </location>
</feature>
<feature type="site" description="Stabilizes the basic form of H active site to accept a proton" evidence="1">
    <location>
        <position position="95"/>
    </location>
</feature>
<evidence type="ECO:0000255" key="1">
    <source>
        <dbReference type="HAMAP-Rule" id="MF_00083"/>
    </source>
</evidence>
<keyword id="KW-0963">Cytoplasm</keyword>
<keyword id="KW-0378">Hydrolase</keyword>
<keyword id="KW-0694">RNA-binding</keyword>
<keyword id="KW-0820">tRNA-binding</keyword>
<organism>
    <name type="scientific">Actinobacillus pleuropneumoniae serotype 7 (strain AP76)</name>
    <dbReference type="NCBI Taxonomy" id="537457"/>
    <lineage>
        <taxon>Bacteria</taxon>
        <taxon>Pseudomonadati</taxon>
        <taxon>Pseudomonadota</taxon>
        <taxon>Gammaproteobacteria</taxon>
        <taxon>Pasteurellales</taxon>
        <taxon>Pasteurellaceae</taxon>
        <taxon>Actinobacillus</taxon>
    </lineage>
</organism>
<reference key="1">
    <citation type="submission" date="2008-06" db="EMBL/GenBank/DDBJ databases">
        <title>Genome and proteome analysis of A. pleuropneumoniae serotype 7.</title>
        <authorList>
            <person name="Linke B."/>
            <person name="Buettner F."/>
            <person name="Martinez-Arias R."/>
            <person name="Goesmann A."/>
            <person name="Baltes N."/>
            <person name="Tegetmeyer H."/>
            <person name="Singh M."/>
            <person name="Gerlach G.F."/>
        </authorList>
    </citation>
    <scope>NUCLEOTIDE SEQUENCE [LARGE SCALE GENOMIC DNA]</scope>
    <source>
        <strain>AP76</strain>
    </source>
</reference>
<protein>
    <recommendedName>
        <fullName evidence="1">Peptidyl-tRNA hydrolase</fullName>
        <shortName evidence="1">Pth</shortName>
        <ecNumber evidence="1">3.1.1.29</ecNumber>
    </recommendedName>
</protein>
<accession>B3GZM3</accession>